<organism>
    <name type="scientific">Xanthomonas campestris pv. campestris (strain 8004)</name>
    <dbReference type="NCBI Taxonomy" id="314565"/>
    <lineage>
        <taxon>Bacteria</taxon>
        <taxon>Pseudomonadati</taxon>
        <taxon>Pseudomonadota</taxon>
        <taxon>Gammaproteobacteria</taxon>
        <taxon>Lysobacterales</taxon>
        <taxon>Lysobacteraceae</taxon>
        <taxon>Xanthomonas</taxon>
    </lineage>
</organism>
<protein>
    <recommendedName>
        <fullName evidence="1">Protein translocase subunit SecA</fullName>
        <ecNumber evidence="1">7.4.2.8</ecNumber>
    </recommendedName>
</protein>
<gene>
    <name evidence="1" type="primary">secA</name>
    <name type="ordered locus">XC_3501</name>
</gene>
<feature type="chain" id="PRO_0000321044" description="Protein translocase subunit SecA">
    <location>
        <begin position="1"/>
        <end position="912"/>
    </location>
</feature>
<feature type="region of interest" description="Disordered" evidence="2">
    <location>
        <begin position="855"/>
        <end position="912"/>
    </location>
</feature>
<feature type="compositionally biased region" description="Basic residues" evidence="2">
    <location>
        <begin position="902"/>
        <end position="912"/>
    </location>
</feature>
<feature type="binding site" evidence="1">
    <location>
        <position position="87"/>
    </location>
    <ligand>
        <name>ATP</name>
        <dbReference type="ChEBI" id="CHEBI:30616"/>
    </ligand>
</feature>
<feature type="binding site" evidence="1">
    <location>
        <begin position="105"/>
        <end position="109"/>
    </location>
    <ligand>
        <name>ATP</name>
        <dbReference type="ChEBI" id="CHEBI:30616"/>
    </ligand>
</feature>
<feature type="binding site" evidence="1">
    <location>
        <position position="508"/>
    </location>
    <ligand>
        <name>ATP</name>
        <dbReference type="ChEBI" id="CHEBI:30616"/>
    </ligand>
</feature>
<feature type="binding site" evidence="1">
    <location>
        <position position="896"/>
    </location>
    <ligand>
        <name>Zn(2+)</name>
        <dbReference type="ChEBI" id="CHEBI:29105"/>
    </ligand>
</feature>
<feature type="binding site" evidence="1">
    <location>
        <position position="898"/>
    </location>
    <ligand>
        <name>Zn(2+)</name>
        <dbReference type="ChEBI" id="CHEBI:29105"/>
    </ligand>
</feature>
<feature type="binding site" evidence="1">
    <location>
        <position position="907"/>
    </location>
    <ligand>
        <name>Zn(2+)</name>
        <dbReference type="ChEBI" id="CHEBI:29105"/>
    </ligand>
</feature>
<feature type="binding site" evidence="1">
    <location>
        <position position="908"/>
    </location>
    <ligand>
        <name>Zn(2+)</name>
        <dbReference type="ChEBI" id="CHEBI:29105"/>
    </ligand>
</feature>
<reference key="1">
    <citation type="journal article" date="2005" name="Genome Res.">
        <title>Comparative and functional genomic analyses of the pathogenicity of phytopathogen Xanthomonas campestris pv. campestris.</title>
        <authorList>
            <person name="Qian W."/>
            <person name="Jia Y."/>
            <person name="Ren S.-X."/>
            <person name="He Y.-Q."/>
            <person name="Feng J.-X."/>
            <person name="Lu L.-F."/>
            <person name="Sun Q."/>
            <person name="Ying G."/>
            <person name="Tang D.-J."/>
            <person name="Tang H."/>
            <person name="Wu W."/>
            <person name="Hao P."/>
            <person name="Wang L."/>
            <person name="Jiang B.-L."/>
            <person name="Zeng S."/>
            <person name="Gu W.-Y."/>
            <person name="Lu G."/>
            <person name="Rong L."/>
            <person name="Tian Y."/>
            <person name="Yao Z."/>
            <person name="Fu G."/>
            <person name="Chen B."/>
            <person name="Fang R."/>
            <person name="Qiang B."/>
            <person name="Chen Z."/>
            <person name="Zhao G.-P."/>
            <person name="Tang J.-L."/>
            <person name="He C."/>
        </authorList>
    </citation>
    <scope>NUCLEOTIDE SEQUENCE [LARGE SCALE GENOMIC DNA]</scope>
    <source>
        <strain>8004</strain>
    </source>
</reference>
<proteinExistence type="inferred from homology"/>
<evidence type="ECO:0000255" key="1">
    <source>
        <dbReference type="HAMAP-Rule" id="MF_01382"/>
    </source>
</evidence>
<evidence type="ECO:0000256" key="2">
    <source>
        <dbReference type="SAM" id="MobiDB-lite"/>
    </source>
</evidence>
<keyword id="KW-0067">ATP-binding</keyword>
<keyword id="KW-0997">Cell inner membrane</keyword>
<keyword id="KW-1003">Cell membrane</keyword>
<keyword id="KW-0963">Cytoplasm</keyword>
<keyword id="KW-0472">Membrane</keyword>
<keyword id="KW-0479">Metal-binding</keyword>
<keyword id="KW-0547">Nucleotide-binding</keyword>
<keyword id="KW-0653">Protein transport</keyword>
<keyword id="KW-1278">Translocase</keyword>
<keyword id="KW-0811">Translocation</keyword>
<keyword id="KW-0813">Transport</keyword>
<keyword id="KW-0862">Zinc</keyword>
<accession>Q4UQX9</accession>
<sequence>MINSLLTRVFGSRNERQLRQLNRLVTQINALEPTIEKLSDAELQAKTPEFKQRLAAGESLDKILPEAFAVCREASRRVLGMRHYDVQLIGGMVLHLGKIAEMRTGEGKTLVATLPVYLNALEGQGVHVVTVNDYLARRDAAQMGKLYNWLGLSVGVVYPGMPHSDKHAAYAADITYGTNNEFGFDYLRDNMALSRADRYQRKLHYAIVDEVDSILIDEARTPLIISGPADESPELYIRVNRIVPQLTKQESEEGEGDYWIDEKGKQVHLSEAGMGHAEELLLQAGILENADDGLYAAQNLSVVHHLNAALRAHAIYQRDVDYIVRDGEVVIVDEFTGRTLSGRRWSDGLHQAVEAKEGVPVQRENQTLASITFQNLFRMYKKLSGMTGTADTEAYEFQSIYGLEVVVIPTNRPTVRKDHPDQVFLNRKGKFNAVLADIEDCAKRGQPVLVGTTSIETSEMLSEHLRKAGVKHEVLNAKQHEREATIVANAGQPGAVTIATNMAGRGTDIVLGGSLEAEYHVLGEDATEEARFKIKTDWQRRHDAVKAAGGLHIIGTERHESRRIDNQLRGRAGRQGDPGSSRFYLSLEDNLMRIFASDWVQKAMRMMGMKEDDVIEDRLVSRQIEKAQRKVEAHNFDIRKNLLDFDDVNNDQRKVIYAQRDDLLDAESVKDNVDGIRGDVIYDLVARFVPPNSVDEQWDLQGLEATLESELGMPLALRELAKTQEELDAEQIAAKVQTAVDAHFAEKEAAVGADTMRALEKHVMLTVLDQGWKEHLAKMDYLRQGIYLRGYAQKQPKQEYKKEAFELFSEMLENVKREVINLLARVRIRSEEEVAELEEQERRQAEARLLASQFQHQDAGGYGADEEVEQMQGGNAPVPVSQVTRDEPKVGRNDPCPCGSGKKYKHCHGQLS</sequence>
<name>SECA_XANC8</name>
<comment type="function">
    <text evidence="1">Part of the Sec protein translocase complex. Interacts with the SecYEG preprotein conducting channel. Has a central role in coupling the hydrolysis of ATP to the transfer of proteins into and across the cell membrane, serving both as a receptor for the preprotein-SecB complex and as an ATP-driven molecular motor driving the stepwise translocation of polypeptide chains across the membrane.</text>
</comment>
<comment type="catalytic activity">
    <reaction evidence="1">
        <text>ATP + H2O + cellular proteinSide 1 = ADP + phosphate + cellular proteinSide 2.</text>
        <dbReference type="EC" id="7.4.2.8"/>
    </reaction>
</comment>
<comment type="cofactor">
    <cofactor evidence="1">
        <name>Zn(2+)</name>
        <dbReference type="ChEBI" id="CHEBI:29105"/>
    </cofactor>
    <text evidence="1">May bind 1 zinc ion per subunit.</text>
</comment>
<comment type="subunit">
    <text evidence="1">Monomer and homodimer. Part of the essential Sec protein translocation apparatus which comprises SecA, SecYEG and auxiliary proteins SecDF-YajC and YidC.</text>
</comment>
<comment type="subcellular location">
    <subcellularLocation>
        <location evidence="1">Cell inner membrane</location>
        <topology evidence="1">Peripheral membrane protein</topology>
        <orientation evidence="1">Cytoplasmic side</orientation>
    </subcellularLocation>
    <subcellularLocation>
        <location evidence="1">Cytoplasm</location>
    </subcellularLocation>
    <text evidence="1">Distribution is 50-50.</text>
</comment>
<comment type="similarity">
    <text evidence="1">Belongs to the SecA family.</text>
</comment>
<dbReference type="EC" id="7.4.2.8" evidence="1"/>
<dbReference type="EMBL" id="CP000050">
    <property type="protein sequence ID" value="AAY50544.1"/>
    <property type="molecule type" value="Genomic_DNA"/>
</dbReference>
<dbReference type="RefSeq" id="WP_011270004.1">
    <property type="nucleotide sequence ID" value="NC_007086.1"/>
</dbReference>
<dbReference type="SMR" id="Q4UQX9"/>
<dbReference type="KEGG" id="xcb:XC_3501"/>
<dbReference type="HOGENOM" id="CLU_005314_3_0_6"/>
<dbReference type="Proteomes" id="UP000000420">
    <property type="component" value="Chromosome"/>
</dbReference>
<dbReference type="GO" id="GO:0031522">
    <property type="term" value="C:cell envelope Sec protein transport complex"/>
    <property type="evidence" value="ECO:0007669"/>
    <property type="project" value="TreeGrafter"/>
</dbReference>
<dbReference type="GO" id="GO:0005829">
    <property type="term" value="C:cytosol"/>
    <property type="evidence" value="ECO:0007669"/>
    <property type="project" value="TreeGrafter"/>
</dbReference>
<dbReference type="GO" id="GO:0005886">
    <property type="term" value="C:plasma membrane"/>
    <property type="evidence" value="ECO:0007669"/>
    <property type="project" value="UniProtKB-SubCell"/>
</dbReference>
<dbReference type="GO" id="GO:0005524">
    <property type="term" value="F:ATP binding"/>
    <property type="evidence" value="ECO:0007669"/>
    <property type="project" value="UniProtKB-UniRule"/>
</dbReference>
<dbReference type="GO" id="GO:0046872">
    <property type="term" value="F:metal ion binding"/>
    <property type="evidence" value="ECO:0007669"/>
    <property type="project" value="UniProtKB-KW"/>
</dbReference>
<dbReference type="GO" id="GO:0008564">
    <property type="term" value="F:protein-exporting ATPase activity"/>
    <property type="evidence" value="ECO:0007669"/>
    <property type="project" value="UniProtKB-EC"/>
</dbReference>
<dbReference type="GO" id="GO:0065002">
    <property type="term" value="P:intracellular protein transmembrane transport"/>
    <property type="evidence" value="ECO:0007669"/>
    <property type="project" value="UniProtKB-UniRule"/>
</dbReference>
<dbReference type="GO" id="GO:0017038">
    <property type="term" value="P:protein import"/>
    <property type="evidence" value="ECO:0007669"/>
    <property type="project" value="InterPro"/>
</dbReference>
<dbReference type="GO" id="GO:0006605">
    <property type="term" value="P:protein targeting"/>
    <property type="evidence" value="ECO:0007669"/>
    <property type="project" value="UniProtKB-UniRule"/>
</dbReference>
<dbReference type="GO" id="GO:0043952">
    <property type="term" value="P:protein transport by the Sec complex"/>
    <property type="evidence" value="ECO:0007669"/>
    <property type="project" value="TreeGrafter"/>
</dbReference>
<dbReference type="CDD" id="cd17928">
    <property type="entry name" value="DEXDc_SecA"/>
    <property type="match status" value="1"/>
</dbReference>
<dbReference type="CDD" id="cd18803">
    <property type="entry name" value="SF2_C_secA"/>
    <property type="match status" value="1"/>
</dbReference>
<dbReference type="FunFam" id="3.40.50.300:FF:000081">
    <property type="entry name" value="Preprotein translocase subunit SecA"/>
    <property type="match status" value="1"/>
</dbReference>
<dbReference type="FunFam" id="3.40.50.300:FF:000113">
    <property type="entry name" value="Preprotein translocase subunit SecA"/>
    <property type="match status" value="1"/>
</dbReference>
<dbReference type="FunFam" id="3.90.1440.10:FF:000001">
    <property type="entry name" value="Preprotein translocase subunit SecA"/>
    <property type="match status" value="1"/>
</dbReference>
<dbReference type="FunFam" id="1.10.3060.10:FF:000003">
    <property type="entry name" value="Protein translocase subunit SecA"/>
    <property type="match status" value="1"/>
</dbReference>
<dbReference type="Gene3D" id="1.10.3060.10">
    <property type="entry name" value="Helical scaffold and wing domains of SecA"/>
    <property type="match status" value="1"/>
</dbReference>
<dbReference type="Gene3D" id="3.40.50.300">
    <property type="entry name" value="P-loop containing nucleotide triphosphate hydrolases"/>
    <property type="match status" value="2"/>
</dbReference>
<dbReference type="Gene3D" id="3.90.1440.10">
    <property type="entry name" value="SecA, preprotein cross-linking domain"/>
    <property type="match status" value="1"/>
</dbReference>
<dbReference type="HAMAP" id="MF_01382">
    <property type="entry name" value="SecA"/>
    <property type="match status" value="1"/>
</dbReference>
<dbReference type="InterPro" id="IPR014001">
    <property type="entry name" value="Helicase_ATP-bd"/>
</dbReference>
<dbReference type="InterPro" id="IPR001650">
    <property type="entry name" value="Helicase_C-like"/>
</dbReference>
<dbReference type="InterPro" id="IPR027417">
    <property type="entry name" value="P-loop_NTPase"/>
</dbReference>
<dbReference type="InterPro" id="IPR004027">
    <property type="entry name" value="SEC_C_motif"/>
</dbReference>
<dbReference type="InterPro" id="IPR000185">
    <property type="entry name" value="SecA"/>
</dbReference>
<dbReference type="InterPro" id="IPR020937">
    <property type="entry name" value="SecA_CS"/>
</dbReference>
<dbReference type="InterPro" id="IPR011115">
    <property type="entry name" value="SecA_DEAD"/>
</dbReference>
<dbReference type="InterPro" id="IPR014018">
    <property type="entry name" value="SecA_motor_DEAD"/>
</dbReference>
<dbReference type="InterPro" id="IPR011130">
    <property type="entry name" value="SecA_preprotein_X-link_dom"/>
</dbReference>
<dbReference type="InterPro" id="IPR044722">
    <property type="entry name" value="SecA_SF2_C"/>
</dbReference>
<dbReference type="InterPro" id="IPR011116">
    <property type="entry name" value="SecA_Wing/Scaffold"/>
</dbReference>
<dbReference type="InterPro" id="IPR036266">
    <property type="entry name" value="SecA_Wing/Scaffold_sf"/>
</dbReference>
<dbReference type="InterPro" id="IPR036670">
    <property type="entry name" value="SecA_X-link_sf"/>
</dbReference>
<dbReference type="NCBIfam" id="NF009538">
    <property type="entry name" value="PRK12904.1"/>
    <property type="match status" value="1"/>
</dbReference>
<dbReference type="NCBIfam" id="TIGR00963">
    <property type="entry name" value="secA"/>
    <property type="match status" value="1"/>
</dbReference>
<dbReference type="PANTHER" id="PTHR30612:SF0">
    <property type="entry name" value="CHLOROPLAST PROTEIN-TRANSPORTING ATPASE"/>
    <property type="match status" value="1"/>
</dbReference>
<dbReference type="PANTHER" id="PTHR30612">
    <property type="entry name" value="SECA INNER MEMBRANE COMPONENT OF SEC PROTEIN SECRETION SYSTEM"/>
    <property type="match status" value="1"/>
</dbReference>
<dbReference type="Pfam" id="PF21090">
    <property type="entry name" value="P-loop_SecA"/>
    <property type="match status" value="1"/>
</dbReference>
<dbReference type="Pfam" id="PF02810">
    <property type="entry name" value="SEC-C"/>
    <property type="match status" value="1"/>
</dbReference>
<dbReference type="Pfam" id="PF07517">
    <property type="entry name" value="SecA_DEAD"/>
    <property type="match status" value="1"/>
</dbReference>
<dbReference type="Pfam" id="PF01043">
    <property type="entry name" value="SecA_PP_bind"/>
    <property type="match status" value="1"/>
</dbReference>
<dbReference type="Pfam" id="PF07516">
    <property type="entry name" value="SecA_SW"/>
    <property type="match status" value="1"/>
</dbReference>
<dbReference type="PRINTS" id="PR00906">
    <property type="entry name" value="SECA"/>
</dbReference>
<dbReference type="SMART" id="SM00957">
    <property type="entry name" value="SecA_DEAD"/>
    <property type="match status" value="1"/>
</dbReference>
<dbReference type="SMART" id="SM00958">
    <property type="entry name" value="SecA_PP_bind"/>
    <property type="match status" value="1"/>
</dbReference>
<dbReference type="SUPFAM" id="SSF81886">
    <property type="entry name" value="Helical scaffold and wing domains of SecA"/>
    <property type="match status" value="1"/>
</dbReference>
<dbReference type="SUPFAM" id="SSF52540">
    <property type="entry name" value="P-loop containing nucleoside triphosphate hydrolases"/>
    <property type="match status" value="2"/>
</dbReference>
<dbReference type="SUPFAM" id="SSF81767">
    <property type="entry name" value="Pre-protein crosslinking domain of SecA"/>
    <property type="match status" value="1"/>
</dbReference>
<dbReference type="PROSITE" id="PS01312">
    <property type="entry name" value="SECA"/>
    <property type="match status" value="1"/>
</dbReference>
<dbReference type="PROSITE" id="PS51196">
    <property type="entry name" value="SECA_MOTOR_DEAD"/>
    <property type="match status" value="1"/>
</dbReference>